<name>TRPG_PHYBL</name>
<organism>
    <name type="scientific">Phycomyces blakesleeanus</name>
    <dbReference type="NCBI Taxonomy" id="4837"/>
    <lineage>
        <taxon>Eukaryota</taxon>
        <taxon>Fungi</taxon>
        <taxon>Fungi incertae sedis</taxon>
        <taxon>Mucoromycota</taxon>
        <taxon>Mucoromycotina</taxon>
        <taxon>Mucoromycetes</taxon>
        <taxon>Mucorales</taxon>
        <taxon>Phycomycetaceae</taxon>
        <taxon>Phycomyces</taxon>
    </lineage>
</organism>
<comment type="function">
    <text>Trifunctional enzyme bearing the Gln amidotransferase (GATase) domain of anthranilate synthase, indole-glycerolphosphate synthase, and phosphoribosylanthranilate isomerase activities.</text>
</comment>
<comment type="catalytic activity">
    <reaction>
        <text>N-(5-phospho-beta-D-ribosyl)anthranilate = 1-(2-carboxyphenylamino)-1-deoxy-D-ribulose 5-phosphate</text>
        <dbReference type="Rhea" id="RHEA:21540"/>
        <dbReference type="ChEBI" id="CHEBI:18277"/>
        <dbReference type="ChEBI" id="CHEBI:58613"/>
        <dbReference type="EC" id="5.3.1.24"/>
    </reaction>
</comment>
<comment type="catalytic activity">
    <reaction>
        <text>1-(2-carboxyphenylamino)-1-deoxy-D-ribulose 5-phosphate + H(+) = (1S,2R)-1-C-(indol-3-yl)glycerol 3-phosphate + CO2 + H2O</text>
        <dbReference type="Rhea" id="RHEA:23476"/>
        <dbReference type="ChEBI" id="CHEBI:15377"/>
        <dbReference type="ChEBI" id="CHEBI:15378"/>
        <dbReference type="ChEBI" id="CHEBI:16526"/>
        <dbReference type="ChEBI" id="CHEBI:58613"/>
        <dbReference type="ChEBI" id="CHEBI:58866"/>
        <dbReference type="EC" id="4.1.1.48"/>
    </reaction>
</comment>
<comment type="catalytic activity">
    <reaction>
        <text>chorismate + L-glutamine = anthranilate + pyruvate + L-glutamate + H(+)</text>
        <dbReference type="Rhea" id="RHEA:21732"/>
        <dbReference type="ChEBI" id="CHEBI:15361"/>
        <dbReference type="ChEBI" id="CHEBI:15378"/>
        <dbReference type="ChEBI" id="CHEBI:16567"/>
        <dbReference type="ChEBI" id="CHEBI:29748"/>
        <dbReference type="ChEBI" id="CHEBI:29985"/>
        <dbReference type="ChEBI" id="CHEBI:58359"/>
        <dbReference type="EC" id="4.1.3.27"/>
    </reaction>
</comment>
<comment type="pathway">
    <text>Amino-acid biosynthesis; L-tryptophan biosynthesis; L-tryptophan from chorismate: step 1/5.</text>
</comment>
<comment type="pathway">
    <text>Amino-acid biosynthesis; L-tryptophan biosynthesis; L-tryptophan from chorismate: step 3/5.</text>
</comment>
<comment type="pathway">
    <text>Amino-acid biosynthesis; L-tryptophan biosynthesis; L-tryptophan from chorismate: step 4/5.</text>
</comment>
<keyword id="KW-0028">Amino-acid biosynthesis</keyword>
<keyword id="KW-0057">Aromatic amino acid biosynthesis</keyword>
<keyword id="KW-0210">Decarboxylase</keyword>
<keyword id="KW-0315">Glutamine amidotransferase</keyword>
<keyword id="KW-0413">Isomerase</keyword>
<keyword id="KW-0456">Lyase</keyword>
<keyword id="KW-0511">Multifunctional enzyme</keyword>
<keyword id="KW-0822">Tryptophan biosynthesis</keyword>
<accession>P20409</accession>
<dbReference type="EC" id="4.1.3.27"/>
<dbReference type="EC" id="4.1.1.48"/>
<dbReference type="EC" id="5.3.1.24"/>
<dbReference type="EMBL" id="M17240">
    <property type="status" value="NOT_ANNOTATED_CDS"/>
    <property type="molecule type" value="Genomic_DNA"/>
</dbReference>
<dbReference type="EMBL" id="M17241">
    <property type="status" value="NOT_ANNOTATED_CDS"/>
    <property type="molecule type" value="Genomic_DNA"/>
</dbReference>
<dbReference type="EMBL" id="M23177">
    <property type="protein sequence ID" value="AAA33633.1"/>
    <property type="molecule type" value="Genomic_DNA"/>
</dbReference>
<dbReference type="PIR" id="JT0383">
    <property type="entry name" value="JT0383"/>
</dbReference>
<dbReference type="SMR" id="P20409"/>
<dbReference type="MEROPS" id="C26.959"/>
<dbReference type="VEuPathDB" id="FungiDB:PHYBLDRAFT_124173"/>
<dbReference type="UniPathway" id="UPA00035">
    <property type="reaction ID" value="UER00040"/>
</dbReference>
<dbReference type="UniPathway" id="UPA00035">
    <property type="reaction ID" value="UER00042"/>
</dbReference>
<dbReference type="UniPathway" id="UPA00035">
    <property type="reaction ID" value="UER00043"/>
</dbReference>
<dbReference type="GO" id="GO:0005829">
    <property type="term" value="C:cytosol"/>
    <property type="evidence" value="ECO:0007669"/>
    <property type="project" value="TreeGrafter"/>
</dbReference>
<dbReference type="GO" id="GO:0004049">
    <property type="term" value="F:anthranilate synthase activity"/>
    <property type="evidence" value="ECO:0007669"/>
    <property type="project" value="UniProtKB-EC"/>
</dbReference>
<dbReference type="GO" id="GO:0004425">
    <property type="term" value="F:indole-3-glycerol-phosphate synthase activity"/>
    <property type="evidence" value="ECO:0007669"/>
    <property type="project" value="UniProtKB-EC"/>
</dbReference>
<dbReference type="GO" id="GO:0004640">
    <property type="term" value="F:phosphoribosylanthranilate isomerase activity"/>
    <property type="evidence" value="ECO:0007669"/>
    <property type="project" value="UniProtKB-EC"/>
</dbReference>
<dbReference type="GO" id="GO:0000162">
    <property type="term" value="P:L-tryptophan biosynthetic process"/>
    <property type="evidence" value="ECO:0007669"/>
    <property type="project" value="UniProtKB-UniPathway"/>
</dbReference>
<dbReference type="CDD" id="cd01743">
    <property type="entry name" value="GATase1_Anthranilate_Synthase"/>
    <property type="match status" value="1"/>
</dbReference>
<dbReference type="CDD" id="cd00331">
    <property type="entry name" value="IGPS"/>
    <property type="match status" value="1"/>
</dbReference>
<dbReference type="CDD" id="cd00405">
    <property type="entry name" value="PRAI"/>
    <property type="match status" value="1"/>
</dbReference>
<dbReference type="FunFam" id="3.20.20.70:FF:000136">
    <property type="entry name" value="Multifunctional tryptophan biosynthesis protein"/>
    <property type="match status" value="1"/>
</dbReference>
<dbReference type="FunFam" id="3.40.50.880:FF:000031">
    <property type="entry name" value="Multifunctional tryptophan biosynthesis protein"/>
    <property type="match status" value="1"/>
</dbReference>
<dbReference type="Gene3D" id="3.40.50.880">
    <property type="match status" value="1"/>
</dbReference>
<dbReference type="Gene3D" id="3.20.20.70">
    <property type="entry name" value="Aldolase class I"/>
    <property type="match status" value="2"/>
</dbReference>
<dbReference type="HAMAP" id="MF_00135">
    <property type="entry name" value="PRAI"/>
    <property type="match status" value="1"/>
</dbReference>
<dbReference type="InterPro" id="IPR013785">
    <property type="entry name" value="Aldolase_TIM"/>
</dbReference>
<dbReference type="InterPro" id="IPR050472">
    <property type="entry name" value="Anth_synth/Amidotransfase"/>
</dbReference>
<dbReference type="InterPro" id="IPR016302">
    <property type="entry name" value="Anthranilate_synth_II"/>
</dbReference>
<dbReference type="InterPro" id="IPR029062">
    <property type="entry name" value="Class_I_gatase-like"/>
</dbReference>
<dbReference type="InterPro" id="IPR017926">
    <property type="entry name" value="GATASE"/>
</dbReference>
<dbReference type="InterPro" id="IPR013798">
    <property type="entry name" value="Indole-3-glycerol_P_synth_dom"/>
</dbReference>
<dbReference type="InterPro" id="IPR001468">
    <property type="entry name" value="Indole-3-GlycerolPSynthase_CS"/>
</dbReference>
<dbReference type="InterPro" id="IPR001240">
    <property type="entry name" value="PRAI_dom"/>
</dbReference>
<dbReference type="InterPro" id="IPR011060">
    <property type="entry name" value="RibuloseP-bd_barrel"/>
</dbReference>
<dbReference type="InterPro" id="IPR006221">
    <property type="entry name" value="TrpG/PapA_dom"/>
</dbReference>
<dbReference type="NCBIfam" id="TIGR00566">
    <property type="entry name" value="trpG_papA"/>
    <property type="match status" value="1"/>
</dbReference>
<dbReference type="PANTHER" id="PTHR43418:SF4">
    <property type="entry name" value="MULTIFUNCTIONAL TRYPTOPHAN BIOSYNTHESIS PROTEIN"/>
    <property type="match status" value="1"/>
</dbReference>
<dbReference type="PANTHER" id="PTHR43418">
    <property type="entry name" value="MULTIFUNCTIONAL TRYPTOPHAN BIOSYNTHESIS PROTEIN-RELATED"/>
    <property type="match status" value="1"/>
</dbReference>
<dbReference type="Pfam" id="PF00117">
    <property type="entry name" value="GATase"/>
    <property type="match status" value="1"/>
</dbReference>
<dbReference type="Pfam" id="PF00218">
    <property type="entry name" value="IGPS"/>
    <property type="match status" value="1"/>
</dbReference>
<dbReference type="Pfam" id="PF00697">
    <property type="entry name" value="PRAI"/>
    <property type="match status" value="1"/>
</dbReference>
<dbReference type="PIRSF" id="PIRSF001382">
    <property type="entry name" value="TrpG-trpC-trpF"/>
    <property type="match status" value="1"/>
</dbReference>
<dbReference type="PRINTS" id="PR00097">
    <property type="entry name" value="ANTSNTHASEII"/>
</dbReference>
<dbReference type="PRINTS" id="PR00096">
    <property type="entry name" value="GATASE"/>
</dbReference>
<dbReference type="SUPFAM" id="SSF52317">
    <property type="entry name" value="Class I glutamine amidotransferase-like"/>
    <property type="match status" value="1"/>
</dbReference>
<dbReference type="SUPFAM" id="SSF51366">
    <property type="entry name" value="Ribulose-phoshate binding barrel"/>
    <property type="match status" value="2"/>
</dbReference>
<dbReference type="PROSITE" id="PS51273">
    <property type="entry name" value="GATASE_TYPE_1"/>
    <property type="match status" value="1"/>
</dbReference>
<dbReference type="PROSITE" id="PS00614">
    <property type="entry name" value="IGPS"/>
    <property type="match status" value="1"/>
</dbReference>
<feature type="chain" id="PRO_0000056864" description="Multifunctional tryptophan biosynthesis protein">
    <location>
        <begin position="1"/>
        <end position="765"/>
    </location>
</feature>
<feature type="domain" description="Glutamine amidotransferase type-1">
    <location>
        <begin position="2"/>
        <end position="196"/>
    </location>
</feature>
<feature type="region of interest" description="Indole-3-glycerol phosphate synthase">
    <location>
        <begin position="231"/>
        <end position="494"/>
    </location>
</feature>
<feature type="region of interest" description="N-(5'-phosphoribosyl)anthranilate isomerase">
    <location>
        <begin position="512"/>
        <end position="765"/>
    </location>
</feature>
<feature type="active site" description="Nucleophile; for GATase activity" evidence="2">
    <location>
        <position position="81"/>
    </location>
</feature>
<feature type="active site" description="For GATase activity" evidence="1">
    <location>
        <position position="170"/>
    </location>
</feature>
<feature type="active site" description="For GATase activity" evidence="1">
    <location>
        <position position="172"/>
    </location>
</feature>
<feature type="binding site" evidence="2">
    <location>
        <begin position="53"/>
        <end position="55"/>
    </location>
    <ligand>
        <name>L-glutamine</name>
        <dbReference type="ChEBI" id="CHEBI:58359"/>
    </ligand>
</feature>
<feature type="binding site" evidence="2">
    <location>
        <position position="85"/>
    </location>
    <ligand>
        <name>L-glutamine</name>
        <dbReference type="ChEBI" id="CHEBI:58359"/>
    </ligand>
</feature>
<feature type="binding site" evidence="2">
    <location>
        <begin position="131"/>
        <end position="132"/>
    </location>
    <ligand>
        <name>L-glutamine</name>
        <dbReference type="ChEBI" id="CHEBI:58359"/>
    </ligand>
</feature>
<feature type="sequence conflict" description="In Ref. 2; AAA33633." evidence="3" ref="2">
    <original>I</original>
    <variation>T</variation>
    <location>
        <position position="606"/>
    </location>
</feature>
<feature type="sequence conflict" description="In Ref. 2; AAA33633." evidence="3" ref="2">
    <original>G</original>
    <variation>A</variation>
    <location>
        <position position="617"/>
    </location>
</feature>
<gene>
    <name type="primary">trp1</name>
</gene>
<reference key="1">
    <citation type="journal article" date="1987" name="Mol. Cell. Biol.">
        <title>Phycomyces blakesleeanus TRP1 gene: organization and functional complementation in Escherichia coli and Saccharomyces cerevisiae.</title>
        <authorList>
            <person name="Revuelta J.L."/>
            <person name="Jayaram M."/>
        </authorList>
    </citation>
    <scope>NUCLEOTIDE SEQUENCE [GENOMIC DNA]</scope>
</reference>
<reference key="2">
    <citation type="journal article" date="1988" name="Gene">
        <title>Structural organization of the TRP1 gene of Phycomyces blakesleeanus: implications for evolutionary gene fusion in fungi.</title>
        <authorList>
            <person name="Choi H.T."/>
            <person name="Revuelta J.L."/>
            <person name="Sadhu C."/>
            <person name="Jayaram M."/>
        </authorList>
    </citation>
    <scope>NUCLEOTIDE SEQUENCE [GENOMIC DNA]</scope>
</reference>
<protein>
    <recommendedName>
        <fullName>Multifunctional tryptophan biosynthesis protein</fullName>
    </recommendedName>
    <domain>
        <recommendedName>
            <fullName>Anthranilate synthase component 2</fullName>
            <shortName>AS</shortName>
            <ecNumber>4.1.3.27</ecNumber>
        </recommendedName>
        <alternativeName>
            <fullName>Anthranilate synthase, glutamine amidotransferase component</fullName>
        </alternativeName>
    </domain>
    <domain>
        <recommendedName>
            <fullName>Indole-3-glycerol phosphate synthase</fullName>
            <shortName>IGPS</shortName>
            <ecNumber>4.1.1.48</ecNumber>
        </recommendedName>
    </domain>
    <domain>
        <recommendedName>
            <fullName>N-(5'-phosphoribosyl)anthranilate isomerase</fullName>
            <shortName>PRAI</shortName>
            <ecNumber>5.3.1.24</ecNumber>
        </recommendedName>
    </domain>
</protein>
<evidence type="ECO:0000250" key="1"/>
<evidence type="ECO:0000250" key="2">
    <source>
        <dbReference type="UniProtKB" id="P00900"/>
    </source>
</evidence>
<evidence type="ECO:0000305" key="3"/>
<proteinExistence type="inferred from homology"/>
<sequence length="765" mass="83423">MATLLIDNYDSFTYNVYQYLCSQGADVVVYRNDKITVDEIVKLNPVNIVISPGPGHPSHDAGVSRDVISYFAGKLPILGICMGEQCIFEVFGGTVSYAGDILHGKTSTIKHDNRGLFKNVPQDNQVTRYHSLAGMPSTLPEVLEVTATTDDGVIMGVRHKKYTVEGVQFHPESILCEHGHTMISNFLSLRGGNWDENPAAGVLAQKVPAAATEKAAQEASPAISTPPTCSTILSRIYAQRVKDVQAAKEVPGQSQADLQKLLNLHIAPPLRDVVNRLKESSPALMAEVKRASPSKGNIDITVNAAEQALQYALAGASVISVLTEPKWFRGSLNDLRQVREACPLLPNRPCILRKTFLLDTYQILEARLYGADTVLLIVAMMSDEDLRELYQYSVSLGMEPLVEVNNAEEMARANAVGAKLIGVNNRGLHSFDVDMETTSRLAEMVPEGTILCALSGISTRADVETYVSQGVHGLLVGEALMRAWNLKEFVAELLGYKKKDPVPHTPVSRQVQVKICGISSVEAAVEAATAGADLVGLIFAEKSKRQVTVAKAREIVDALHKLPTRSSQLPVKSQKSIDWFDVQTEMVEQRVPWRPLVVGVFVNQSIEYMSQVAVEAGLDLIQLHGTESAEIARFLPVPVIKAFHMDASSFHAGQIPYVTQPGNNQLLLLDAKVPSLPMDRQGGLGQKFDWTIAQDIVNVKRPGCSKEQTFPVILAGGLDPSNISEAIQQVRPWAVDVSSGVETDGKKDLKKIRAFVEKAKSINLQ</sequence>